<feature type="chain" id="PRO_1000077037" description="3-dehydroquinate dehydratase">
    <location>
        <begin position="1"/>
        <end position="145"/>
    </location>
</feature>
<feature type="active site" description="Proton acceptor" evidence="1">
    <location>
        <position position="22"/>
    </location>
</feature>
<feature type="active site" description="Proton donor" evidence="1">
    <location>
        <position position="97"/>
    </location>
</feature>
<feature type="binding site" evidence="1">
    <location>
        <position position="71"/>
    </location>
    <ligand>
        <name>substrate</name>
    </ligand>
</feature>
<feature type="binding site" evidence="1">
    <location>
        <position position="77"/>
    </location>
    <ligand>
        <name>substrate</name>
    </ligand>
</feature>
<feature type="binding site" evidence="1">
    <location>
        <position position="84"/>
    </location>
    <ligand>
        <name>substrate</name>
    </ligand>
</feature>
<feature type="binding site" evidence="1">
    <location>
        <begin position="98"/>
        <end position="99"/>
    </location>
    <ligand>
        <name>substrate</name>
    </ligand>
</feature>
<feature type="binding site" evidence="1">
    <location>
        <position position="108"/>
    </location>
    <ligand>
        <name>substrate</name>
    </ligand>
</feature>
<feature type="site" description="Transition state stabilizer" evidence="1">
    <location>
        <position position="17"/>
    </location>
</feature>
<proteinExistence type="inferred from homology"/>
<gene>
    <name evidence="1" type="primary">aroQ</name>
    <name type="ordered locus">FTL_1593</name>
</gene>
<dbReference type="EC" id="4.2.1.10" evidence="1"/>
<dbReference type="EMBL" id="AM233362">
    <property type="protein sequence ID" value="CAJ80032.1"/>
    <property type="molecule type" value="Genomic_DNA"/>
</dbReference>
<dbReference type="RefSeq" id="WP_003016972.1">
    <property type="nucleotide sequence ID" value="NZ_CP009694.1"/>
</dbReference>
<dbReference type="SMR" id="Q2A220"/>
<dbReference type="GeneID" id="75263952"/>
<dbReference type="KEGG" id="ftl:FTL_1593"/>
<dbReference type="UniPathway" id="UPA00053">
    <property type="reaction ID" value="UER00086"/>
</dbReference>
<dbReference type="Proteomes" id="UP000001944">
    <property type="component" value="Chromosome"/>
</dbReference>
<dbReference type="GO" id="GO:0003855">
    <property type="term" value="F:3-dehydroquinate dehydratase activity"/>
    <property type="evidence" value="ECO:0007669"/>
    <property type="project" value="UniProtKB-UniRule"/>
</dbReference>
<dbReference type="GO" id="GO:0008652">
    <property type="term" value="P:amino acid biosynthetic process"/>
    <property type="evidence" value="ECO:0007669"/>
    <property type="project" value="UniProtKB-KW"/>
</dbReference>
<dbReference type="GO" id="GO:0009073">
    <property type="term" value="P:aromatic amino acid family biosynthetic process"/>
    <property type="evidence" value="ECO:0007669"/>
    <property type="project" value="UniProtKB-KW"/>
</dbReference>
<dbReference type="GO" id="GO:0009423">
    <property type="term" value="P:chorismate biosynthetic process"/>
    <property type="evidence" value="ECO:0007669"/>
    <property type="project" value="UniProtKB-UniRule"/>
</dbReference>
<dbReference type="GO" id="GO:0019631">
    <property type="term" value="P:quinate catabolic process"/>
    <property type="evidence" value="ECO:0007669"/>
    <property type="project" value="TreeGrafter"/>
</dbReference>
<dbReference type="CDD" id="cd00466">
    <property type="entry name" value="DHQase_II"/>
    <property type="match status" value="1"/>
</dbReference>
<dbReference type="Gene3D" id="3.40.50.9100">
    <property type="entry name" value="Dehydroquinase, class II"/>
    <property type="match status" value="1"/>
</dbReference>
<dbReference type="HAMAP" id="MF_00169">
    <property type="entry name" value="AroQ"/>
    <property type="match status" value="1"/>
</dbReference>
<dbReference type="InterPro" id="IPR001874">
    <property type="entry name" value="DHquinase_II"/>
</dbReference>
<dbReference type="InterPro" id="IPR018509">
    <property type="entry name" value="DHquinase_II_CS"/>
</dbReference>
<dbReference type="InterPro" id="IPR036441">
    <property type="entry name" value="DHquinase_II_sf"/>
</dbReference>
<dbReference type="NCBIfam" id="TIGR01088">
    <property type="entry name" value="aroQ"/>
    <property type="match status" value="1"/>
</dbReference>
<dbReference type="NCBIfam" id="NF003804">
    <property type="entry name" value="PRK05395.1-1"/>
    <property type="match status" value="1"/>
</dbReference>
<dbReference type="NCBIfam" id="NF003805">
    <property type="entry name" value="PRK05395.1-2"/>
    <property type="match status" value="1"/>
</dbReference>
<dbReference type="NCBIfam" id="NF003806">
    <property type="entry name" value="PRK05395.1-3"/>
    <property type="match status" value="1"/>
</dbReference>
<dbReference type="NCBIfam" id="NF003807">
    <property type="entry name" value="PRK05395.1-4"/>
    <property type="match status" value="1"/>
</dbReference>
<dbReference type="PANTHER" id="PTHR21272">
    <property type="entry name" value="CATABOLIC 3-DEHYDROQUINASE"/>
    <property type="match status" value="1"/>
</dbReference>
<dbReference type="PANTHER" id="PTHR21272:SF3">
    <property type="entry name" value="CATABOLIC 3-DEHYDROQUINASE"/>
    <property type="match status" value="1"/>
</dbReference>
<dbReference type="Pfam" id="PF01220">
    <property type="entry name" value="DHquinase_II"/>
    <property type="match status" value="1"/>
</dbReference>
<dbReference type="PIRSF" id="PIRSF001399">
    <property type="entry name" value="DHquinase_II"/>
    <property type="match status" value="1"/>
</dbReference>
<dbReference type="SUPFAM" id="SSF52304">
    <property type="entry name" value="Type II 3-dehydroquinate dehydratase"/>
    <property type="match status" value="1"/>
</dbReference>
<dbReference type="PROSITE" id="PS01029">
    <property type="entry name" value="DEHYDROQUINASE_II"/>
    <property type="match status" value="1"/>
</dbReference>
<organism>
    <name type="scientific">Francisella tularensis subsp. holarctica (strain LVS)</name>
    <dbReference type="NCBI Taxonomy" id="376619"/>
    <lineage>
        <taxon>Bacteria</taxon>
        <taxon>Pseudomonadati</taxon>
        <taxon>Pseudomonadota</taxon>
        <taxon>Gammaproteobacteria</taxon>
        <taxon>Thiotrichales</taxon>
        <taxon>Francisellaceae</taxon>
        <taxon>Francisella</taxon>
    </lineage>
</organism>
<accession>Q2A220</accession>
<sequence>MDVLVINGPNLNLLGTRQPQFYGHKTLADINNDLLKIAKENNINIDFYQSNHEGQIIDKIQQTAAKIIIINPAAFTHTSVAIRDAFLAINKPFIEIHLSNIYNREEFRTKSFLSDIAYGCIFGFGPNGYTLALIEAINYINMKGE</sequence>
<evidence type="ECO:0000255" key="1">
    <source>
        <dbReference type="HAMAP-Rule" id="MF_00169"/>
    </source>
</evidence>
<reference key="1">
    <citation type="submission" date="2006-03" db="EMBL/GenBank/DDBJ databases">
        <title>Complete genome sequence of Francisella tularensis LVS (Live Vaccine Strain).</title>
        <authorList>
            <person name="Chain P."/>
            <person name="Larimer F."/>
            <person name="Land M."/>
            <person name="Stilwagen S."/>
            <person name="Larsson P."/>
            <person name="Bearden S."/>
            <person name="Chu M."/>
            <person name="Oyston P."/>
            <person name="Forsman M."/>
            <person name="Andersson S."/>
            <person name="Lindler L."/>
            <person name="Titball R."/>
            <person name="Garcia E."/>
        </authorList>
    </citation>
    <scope>NUCLEOTIDE SEQUENCE [LARGE SCALE GENOMIC DNA]</scope>
    <source>
        <strain>LVS</strain>
    </source>
</reference>
<protein>
    <recommendedName>
        <fullName evidence="1">3-dehydroquinate dehydratase</fullName>
        <shortName evidence="1">3-dehydroquinase</shortName>
        <ecNumber evidence="1">4.2.1.10</ecNumber>
    </recommendedName>
    <alternativeName>
        <fullName evidence="1">Type II DHQase</fullName>
    </alternativeName>
</protein>
<comment type="function">
    <text evidence="1">Catalyzes a trans-dehydration via an enolate intermediate.</text>
</comment>
<comment type="catalytic activity">
    <reaction evidence="1">
        <text>3-dehydroquinate = 3-dehydroshikimate + H2O</text>
        <dbReference type="Rhea" id="RHEA:21096"/>
        <dbReference type="ChEBI" id="CHEBI:15377"/>
        <dbReference type="ChEBI" id="CHEBI:16630"/>
        <dbReference type="ChEBI" id="CHEBI:32364"/>
        <dbReference type="EC" id="4.2.1.10"/>
    </reaction>
</comment>
<comment type="pathway">
    <text evidence="1">Metabolic intermediate biosynthesis; chorismate biosynthesis; chorismate from D-erythrose 4-phosphate and phosphoenolpyruvate: step 3/7.</text>
</comment>
<comment type="subunit">
    <text evidence="1">Homododecamer.</text>
</comment>
<comment type="similarity">
    <text evidence="1">Belongs to the type-II 3-dehydroquinase family.</text>
</comment>
<name>AROQ_FRATH</name>
<keyword id="KW-0028">Amino-acid biosynthesis</keyword>
<keyword id="KW-0057">Aromatic amino acid biosynthesis</keyword>
<keyword id="KW-0456">Lyase</keyword>
<keyword id="KW-1185">Reference proteome</keyword>